<name>RL21_LEGPC</name>
<reference key="1">
    <citation type="submission" date="2006-11" db="EMBL/GenBank/DDBJ databases">
        <title>Identification and characterization of a new conjugation/ type IVA secretion system (trb/tra) of L. pneumophila Corby localized on a mobile genomic island.</title>
        <authorList>
            <person name="Gloeckner G."/>
            <person name="Albert-Weissenberger C."/>
            <person name="Weinmann E."/>
            <person name="Jacobi S."/>
            <person name="Schunder E."/>
            <person name="Steinert M."/>
            <person name="Buchrieser C."/>
            <person name="Hacker J."/>
            <person name="Heuner K."/>
        </authorList>
    </citation>
    <scope>NUCLEOTIDE SEQUENCE [LARGE SCALE GENOMIC DNA]</scope>
    <source>
        <strain>Corby</strain>
    </source>
</reference>
<proteinExistence type="inferred from homology"/>
<protein>
    <recommendedName>
        <fullName evidence="1">Large ribosomal subunit protein bL21</fullName>
    </recommendedName>
    <alternativeName>
        <fullName evidence="2">50S ribosomal protein L21</fullName>
    </alternativeName>
</protein>
<accession>A5IAS5</accession>
<comment type="function">
    <text evidence="1">This protein binds to 23S rRNA in the presence of protein L20.</text>
</comment>
<comment type="subunit">
    <text evidence="1">Part of the 50S ribosomal subunit. Contacts protein L20.</text>
</comment>
<comment type="similarity">
    <text evidence="1">Belongs to the bacterial ribosomal protein bL21 family.</text>
</comment>
<feature type="chain" id="PRO_1000067849" description="Large ribosomal subunit protein bL21">
    <location>
        <begin position="1"/>
        <end position="103"/>
    </location>
</feature>
<keyword id="KW-0687">Ribonucleoprotein</keyword>
<keyword id="KW-0689">Ribosomal protein</keyword>
<keyword id="KW-0694">RNA-binding</keyword>
<keyword id="KW-0699">rRNA-binding</keyword>
<evidence type="ECO:0000255" key="1">
    <source>
        <dbReference type="HAMAP-Rule" id="MF_01363"/>
    </source>
</evidence>
<evidence type="ECO:0000305" key="2"/>
<sequence>MYAVIKTGGKQYTVKEGDVLKIEMLPENVGNEIKFSEVLMLVDGDKVTCGTPFVAKATVKAEVLDHGRHKKVKIIKFRRRKHHMKQMGHRQYYSQVKITAIGK</sequence>
<dbReference type="EMBL" id="CP000675">
    <property type="protein sequence ID" value="ABQ54475.1"/>
    <property type="molecule type" value="Genomic_DNA"/>
</dbReference>
<dbReference type="RefSeq" id="WP_010948351.1">
    <property type="nucleotide sequence ID" value="NZ_JAPMSS010000010.1"/>
</dbReference>
<dbReference type="SMR" id="A5IAS5"/>
<dbReference type="GeneID" id="57036650"/>
<dbReference type="KEGG" id="lpc:LPC_0488"/>
<dbReference type="HOGENOM" id="CLU_061463_3_3_6"/>
<dbReference type="GO" id="GO:0005737">
    <property type="term" value="C:cytoplasm"/>
    <property type="evidence" value="ECO:0007669"/>
    <property type="project" value="UniProtKB-ARBA"/>
</dbReference>
<dbReference type="GO" id="GO:1990904">
    <property type="term" value="C:ribonucleoprotein complex"/>
    <property type="evidence" value="ECO:0007669"/>
    <property type="project" value="UniProtKB-KW"/>
</dbReference>
<dbReference type="GO" id="GO:0005840">
    <property type="term" value="C:ribosome"/>
    <property type="evidence" value="ECO:0007669"/>
    <property type="project" value="UniProtKB-KW"/>
</dbReference>
<dbReference type="GO" id="GO:0019843">
    <property type="term" value="F:rRNA binding"/>
    <property type="evidence" value="ECO:0007669"/>
    <property type="project" value="UniProtKB-UniRule"/>
</dbReference>
<dbReference type="GO" id="GO:0003735">
    <property type="term" value="F:structural constituent of ribosome"/>
    <property type="evidence" value="ECO:0007669"/>
    <property type="project" value="InterPro"/>
</dbReference>
<dbReference type="GO" id="GO:0006412">
    <property type="term" value="P:translation"/>
    <property type="evidence" value="ECO:0007669"/>
    <property type="project" value="UniProtKB-UniRule"/>
</dbReference>
<dbReference type="HAMAP" id="MF_01363">
    <property type="entry name" value="Ribosomal_bL21"/>
    <property type="match status" value="1"/>
</dbReference>
<dbReference type="InterPro" id="IPR028909">
    <property type="entry name" value="bL21-like"/>
</dbReference>
<dbReference type="InterPro" id="IPR036164">
    <property type="entry name" value="bL21-like_sf"/>
</dbReference>
<dbReference type="InterPro" id="IPR001787">
    <property type="entry name" value="Ribosomal_bL21"/>
</dbReference>
<dbReference type="InterPro" id="IPR018258">
    <property type="entry name" value="Ribosomal_bL21_CS"/>
</dbReference>
<dbReference type="NCBIfam" id="TIGR00061">
    <property type="entry name" value="L21"/>
    <property type="match status" value="1"/>
</dbReference>
<dbReference type="PANTHER" id="PTHR21349">
    <property type="entry name" value="50S RIBOSOMAL PROTEIN L21"/>
    <property type="match status" value="1"/>
</dbReference>
<dbReference type="PANTHER" id="PTHR21349:SF0">
    <property type="entry name" value="LARGE RIBOSOMAL SUBUNIT PROTEIN BL21M"/>
    <property type="match status" value="1"/>
</dbReference>
<dbReference type="Pfam" id="PF00829">
    <property type="entry name" value="Ribosomal_L21p"/>
    <property type="match status" value="1"/>
</dbReference>
<dbReference type="SUPFAM" id="SSF141091">
    <property type="entry name" value="L21p-like"/>
    <property type="match status" value="1"/>
</dbReference>
<dbReference type="PROSITE" id="PS01169">
    <property type="entry name" value="RIBOSOMAL_L21"/>
    <property type="match status" value="1"/>
</dbReference>
<organism>
    <name type="scientific">Legionella pneumophila (strain Corby)</name>
    <dbReference type="NCBI Taxonomy" id="400673"/>
    <lineage>
        <taxon>Bacteria</taxon>
        <taxon>Pseudomonadati</taxon>
        <taxon>Pseudomonadota</taxon>
        <taxon>Gammaproteobacteria</taxon>
        <taxon>Legionellales</taxon>
        <taxon>Legionellaceae</taxon>
        <taxon>Legionella</taxon>
    </lineage>
</organism>
<gene>
    <name evidence="1" type="primary">rplU</name>
    <name type="ordered locus">LPC_0488</name>
</gene>